<accession>Q82Y18</accession>
<sequence length="269" mass="28903">MDQSAAKRMTITTLQNACEQGEKIAVLTCYDATFAAVLEEAGVDILLVGDSLGNVVQGKSSTLPVTLDEMIYHVRCVERGTHRVFIMADMPFGTFQVSPQEAFGNAVRLMAAGAQMVKIEGGQHMAETVEFLSCRGIPVCAHIGLMPQFVHQLGGYRVQGKTPNDARQLREDALLLQEAGAAMLLMELIPAVLGEEITRLLSIPTIGIGAGAACSGQVLVLHDMLGISSGTLPRFVRNFMMDADSIQTAVSNYVEAVKLGAFPAYEHTF</sequence>
<gene>
    <name evidence="1" type="primary">panB</name>
    <name type="ordered locus">NE0072</name>
</gene>
<evidence type="ECO:0000255" key="1">
    <source>
        <dbReference type="HAMAP-Rule" id="MF_00156"/>
    </source>
</evidence>
<protein>
    <recommendedName>
        <fullName evidence="1">3-methyl-2-oxobutanoate hydroxymethyltransferase</fullName>
        <ecNumber evidence="1">2.1.2.11</ecNumber>
    </recommendedName>
    <alternativeName>
        <fullName evidence="1">Ketopantoate hydroxymethyltransferase</fullName>
        <shortName evidence="1">KPHMT</shortName>
    </alternativeName>
</protein>
<dbReference type="EC" id="2.1.2.11" evidence="1"/>
<dbReference type="EMBL" id="AL954747">
    <property type="protein sequence ID" value="CAD83983.1"/>
    <property type="molecule type" value="Genomic_DNA"/>
</dbReference>
<dbReference type="RefSeq" id="WP_011110724.1">
    <property type="nucleotide sequence ID" value="NC_004757.1"/>
</dbReference>
<dbReference type="SMR" id="Q82Y18"/>
<dbReference type="STRING" id="228410.NE0072"/>
<dbReference type="GeneID" id="87103286"/>
<dbReference type="KEGG" id="neu:NE0072"/>
<dbReference type="eggNOG" id="COG0413">
    <property type="taxonomic scope" value="Bacteria"/>
</dbReference>
<dbReference type="HOGENOM" id="CLU_036645_1_0_4"/>
<dbReference type="OrthoDB" id="9781789at2"/>
<dbReference type="PhylomeDB" id="Q82Y18"/>
<dbReference type="UniPathway" id="UPA00028">
    <property type="reaction ID" value="UER00003"/>
</dbReference>
<dbReference type="Proteomes" id="UP000001416">
    <property type="component" value="Chromosome"/>
</dbReference>
<dbReference type="GO" id="GO:0005737">
    <property type="term" value="C:cytoplasm"/>
    <property type="evidence" value="ECO:0007669"/>
    <property type="project" value="UniProtKB-SubCell"/>
</dbReference>
<dbReference type="GO" id="GO:0003864">
    <property type="term" value="F:3-methyl-2-oxobutanoate hydroxymethyltransferase activity"/>
    <property type="evidence" value="ECO:0007669"/>
    <property type="project" value="UniProtKB-UniRule"/>
</dbReference>
<dbReference type="GO" id="GO:0000287">
    <property type="term" value="F:magnesium ion binding"/>
    <property type="evidence" value="ECO:0007669"/>
    <property type="project" value="TreeGrafter"/>
</dbReference>
<dbReference type="GO" id="GO:0015940">
    <property type="term" value="P:pantothenate biosynthetic process"/>
    <property type="evidence" value="ECO:0007669"/>
    <property type="project" value="UniProtKB-UniRule"/>
</dbReference>
<dbReference type="CDD" id="cd06557">
    <property type="entry name" value="KPHMT-like"/>
    <property type="match status" value="1"/>
</dbReference>
<dbReference type="FunFam" id="3.20.20.60:FF:000003">
    <property type="entry name" value="3-methyl-2-oxobutanoate hydroxymethyltransferase"/>
    <property type="match status" value="1"/>
</dbReference>
<dbReference type="Gene3D" id="3.20.20.60">
    <property type="entry name" value="Phosphoenolpyruvate-binding domains"/>
    <property type="match status" value="1"/>
</dbReference>
<dbReference type="HAMAP" id="MF_00156">
    <property type="entry name" value="PanB"/>
    <property type="match status" value="1"/>
</dbReference>
<dbReference type="InterPro" id="IPR003700">
    <property type="entry name" value="Pantoate_hydroxy_MeTrfase"/>
</dbReference>
<dbReference type="InterPro" id="IPR015813">
    <property type="entry name" value="Pyrv/PenolPyrv_kinase-like_dom"/>
</dbReference>
<dbReference type="InterPro" id="IPR040442">
    <property type="entry name" value="Pyrv_kinase-like_dom_sf"/>
</dbReference>
<dbReference type="NCBIfam" id="TIGR00222">
    <property type="entry name" value="panB"/>
    <property type="match status" value="1"/>
</dbReference>
<dbReference type="NCBIfam" id="NF001452">
    <property type="entry name" value="PRK00311.1"/>
    <property type="match status" value="1"/>
</dbReference>
<dbReference type="PANTHER" id="PTHR20881">
    <property type="entry name" value="3-METHYL-2-OXOBUTANOATE HYDROXYMETHYLTRANSFERASE"/>
    <property type="match status" value="1"/>
</dbReference>
<dbReference type="PANTHER" id="PTHR20881:SF0">
    <property type="entry name" value="3-METHYL-2-OXOBUTANOATE HYDROXYMETHYLTRANSFERASE"/>
    <property type="match status" value="1"/>
</dbReference>
<dbReference type="Pfam" id="PF02548">
    <property type="entry name" value="Pantoate_transf"/>
    <property type="match status" value="1"/>
</dbReference>
<dbReference type="PIRSF" id="PIRSF000388">
    <property type="entry name" value="Pantoate_hydroxy_MeTrfase"/>
    <property type="match status" value="1"/>
</dbReference>
<dbReference type="SUPFAM" id="SSF51621">
    <property type="entry name" value="Phosphoenolpyruvate/pyruvate domain"/>
    <property type="match status" value="1"/>
</dbReference>
<feature type="chain" id="PRO_0000184868" description="3-methyl-2-oxobutanoate hydroxymethyltransferase">
    <location>
        <begin position="1"/>
        <end position="269"/>
    </location>
</feature>
<feature type="active site" description="Proton acceptor" evidence="1">
    <location>
        <position position="187"/>
    </location>
</feature>
<feature type="binding site" evidence="1">
    <location>
        <begin position="50"/>
        <end position="51"/>
    </location>
    <ligand>
        <name>3-methyl-2-oxobutanoate</name>
        <dbReference type="ChEBI" id="CHEBI:11851"/>
    </ligand>
</feature>
<feature type="binding site" evidence="1">
    <location>
        <position position="50"/>
    </location>
    <ligand>
        <name>Mg(2+)</name>
        <dbReference type="ChEBI" id="CHEBI:18420"/>
    </ligand>
</feature>
<feature type="binding site" evidence="1">
    <location>
        <position position="89"/>
    </location>
    <ligand>
        <name>3-methyl-2-oxobutanoate</name>
        <dbReference type="ChEBI" id="CHEBI:11851"/>
    </ligand>
</feature>
<feature type="binding site" evidence="1">
    <location>
        <position position="89"/>
    </location>
    <ligand>
        <name>Mg(2+)</name>
        <dbReference type="ChEBI" id="CHEBI:18420"/>
    </ligand>
</feature>
<feature type="binding site" evidence="1">
    <location>
        <position position="118"/>
    </location>
    <ligand>
        <name>3-methyl-2-oxobutanoate</name>
        <dbReference type="ChEBI" id="CHEBI:11851"/>
    </ligand>
</feature>
<feature type="binding site" evidence="1">
    <location>
        <position position="120"/>
    </location>
    <ligand>
        <name>Mg(2+)</name>
        <dbReference type="ChEBI" id="CHEBI:18420"/>
    </ligand>
</feature>
<name>PANB_NITEU</name>
<reference key="1">
    <citation type="journal article" date="2003" name="J. Bacteriol.">
        <title>Complete genome sequence of the ammonia-oxidizing bacterium and obligate chemolithoautotroph Nitrosomonas europaea.</title>
        <authorList>
            <person name="Chain P."/>
            <person name="Lamerdin J.E."/>
            <person name="Larimer F.W."/>
            <person name="Regala W."/>
            <person name="Lao V."/>
            <person name="Land M.L."/>
            <person name="Hauser L."/>
            <person name="Hooper A.B."/>
            <person name="Klotz M.G."/>
            <person name="Norton J."/>
            <person name="Sayavedra-Soto L.A."/>
            <person name="Arciero D.M."/>
            <person name="Hommes N.G."/>
            <person name="Whittaker M.M."/>
            <person name="Arp D.J."/>
        </authorList>
    </citation>
    <scope>NUCLEOTIDE SEQUENCE [LARGE SCALE GENOMIC DNA]</scope>
    <source>
        <strain>ATCC 19718 / CIP 103999 / KCTC 2705 / NBRC 14298</strain>
    </source>
</reference>
<comment type="function">
    <text evidence="1">Catalyzes the reversible reaction in which hydroxymethyl group from 5,10-methylenetetrahydrofolate is transferred onto alpha-ketoisovalerate to form ketopantoate.</text>
</comment>
<comment type="catalytic activity">
    <reaction evidence="1">
        <text>3-methyl-2-oxobutanoate + (6R)-5,10-methylene-5,6,7,8-tetrahydrofolate + H2O = 2-dehydropantoate + (6S)-5,6,7,8-tetrahydrofolate</text>
        <dbReference type="Rhea" id="RHEA:11824"/>
        <dbReference type="ChEBI" id="CHEBI:11561"/>
        <dbReference type="ChEBI" id="CHEBI:11851"/>
        <dbReference type="ChEBI" id="CHEBI:15377"/>
        <dbReference type="ChEBI" id="CHEBI:15636"/>
        <dbReference type="ChEBI" id="CHEBI:57453"/>
        <dbReference type="EC" id="2.1.2.11"/>
    </reaction>
</comment>
<comment type="cofactor">
    <cofactor evidence="1">
        <name>Mg(2+)</name>
        <dbReference type="ChEBI" id="CHEBI:18420"/>
    </cofactor>
    <text evidence="1">Binds 1 Mg(2+) ion per subunit.</text>
</comment>
<comment type="pathway">
    <text evidence="1">Cofactor biosynthesis; (R)-pantothenate biosynthesis; (R)-pantoate from 3-methyl-2-oxobutanoate: step 1/2.</text>
</comment>
<comment type="subunit">
    <text evidence="1">Homodecamer; pentamer of dimers.</text>
</comment>
<comment type="subcellular location">
    <subcellularLocation>
        <location evidence="1">Cytoplasm</location>
    </subcellularLocation>
</comment>
<comment type="similarity">
    <text evidence="1">Belongs to the PanB family.</text>
</comment>
<keyword id="KW-0963">Cytoplasm</keyword>
<keyword id="KW-0460">Magnesium</keyword>
<keyword id="KW-0479">Metal-binding</keyword>
<keyword id="KW-0566">Pantothenate biosynthesis</keyword>
<keyword id="KW-1185">Reference proteome</keyword>
<keyword id="KW-0808">Transferase</keyword>
<organism>
    <name type="scientific">Nitrosomonas europaea (strain ATCC 19718 / CIP 103999 / KCTC 2705 / NBRC 14298)</name>
    <dbReference type="NCBI Taxonomy" id="228410"/>
    <lineage>
        <taxon>Bacteria</taxon>
        <taxon>Pseudomonadati</taxon>
        <taxon>Pseudomonadota</taxon>
        <taxon>Betaproteobacteria</taxon>
        <taxon>Nitrosomonadales</taxon>
        <taxon>Nitrosomonadaceae</taxon>
        <taxon>Nitrosomonas</taxon>
    </lineage>
</organism>
<proteinExistence type="inferred from homology"/>